<organism>
    <name type="scientific">Lactobacillus delbrueckii subsp. bulgaricus (strain ATCC 11842 / DSM 20081 / BCRC 10696 / JCM 1002 / NBRC 13953 / NCIMB 11778 / NCTC 12712 / WDCM 00102 / Lb 14)</name>
    <dbReference type="NCBI Taxonomy" id="390333"/>
    <lineage>
        <taxon>Bacteria</taxon>
        <taxon>Bacillati</taxon>
        <taxon>Bacillota</taxon>
        <taxon>Bacilli</taxon>
        <taxon>Lactobacillales</taxon>
        <taxon>Lactobacillaceae</taxon>
        <taxon>Lactobacillus</taxon>
    </lineage>
</organism>
<sequence>MDSIKGTDEKYLTVSELNWYVKQKFDRDPYLRQIFLQGELSNFRFRRGGHQYFSLKDDKSKINVVMFRGDFDKVKFEPEEGMKVYVTGRLSTYEAQGSYQFYAKSMEPAGLGALYERFRQLQEKLAKEGLFAQEHKRPLPLFPDKIAVVTSASGAVIHDIMVTANRRFSHAEIDLFPAQVQGESAAGSLVSAMQQIQARADEYDVLIIGRGGGSLEDLWPFNEEEVVRQVYAMKMPVISSVGHETDTTLCDLAADCRAATPTAAAEMATPALPLVLAEIGQLQTRLLTDIRAVIQVRAQALAQLENSFIMKEPQRLYEQKMQQVDQLSQQLSRMMEVIVKDQGQKLSLLTQRLQHQAPDRRIKQLKQENSYLAKSLEMGIKRILEQKQAACRQAVQQLDDYSPLKTLARGYSYTTDASGNVVKSVQQLVPGDQVRLHLKDGQAIGRIEEIKEEKND</sequence>
<evidence type="ECO:0000255" key="1">
    <source>
        <dbReference type="HAMAP-Rule" id="MF_00378"/>
    </source>
</evidence>
<gene>
    <name evidence="1" type="primary">xseA</name>
    <name type="ordered locus">Ldb1424</name>
</gene>
<keyword id="KW-0963">Cytoplasm</keyword>
<keyword id="KW-0269">Exonuclease</keyword>
<keyword id="KW-0378">Hydrolase</keyword>
<keyword id="KW-0540">Nuclease</keyword>
<keyword id="KW-1185">Reference proteome</keyword>
<reference key="1">
    <citation type="journal article" date="2006" name="Proc. Natl. Acad. Sci. U.S.A.">
        <title>The complete genome sequence of Lactobacillus bulgaricus reveals extensive and ongoing reductive evolution.</title>
        <authorList>
            <person name="van de Guchte M."/>
            <person name="Penaud S."/>
            <person name="Grimaldi C."/>
            <person name="Barbe V."/>
            <person name="Bryson K."/>
            <person name="Nicolas P."/>
            <person name="Robert C."/>
            <person name="Oztas S."/>
            <person name="Mangenot S."/>
            <person name="Couloux A."/>
            <person name="Loux V."/>
            <person name="Dervyn R."/>
            <person name="Bossy R."/>
            <person name="Bolotin A."/>
            <person name="Batto J.-M."/>
            <person name="Walunas T."/>
            <person name="Gibrat J.-F."/>
            <person name="Bessieres P."/>
            <person name="Weissenbach J."/>
            <person name="Ehrlich S.D."/>
            <person name="Maguin E."/>
        </authorList>
    </citation>
    <scope>NUCLEOTIDE SEQUENCE [LARGE SCALE GENOMIC DNA]</scope>
    <source>
        <strain>ATCC 11842 / DSM 20081 / BCRC 10696 / JCM 1002 / NBRC 13953 / NCIMB 11778 / NCTC 12712 / WDCM 00102 / Lb 14</strain>
    </source>
</reference>
<comment type="function">
    <text evidence="1">Bidirectionally degrades single-stranded DNA into large acid-insoluble oligonucleotides, which are then degraded further into small acid-soluble oligonucleotides.</text>
</comment>
<comment type="catalytic activity">
    <reaction evidence="1">
        <text>Exonucleolytic cleavage in either 5'- to 3'- or 3'- to 5'-direction to yield nucleoside 5'-phosphates.</text>
        <dbReference type="EC" id="3.1.11.6"/>
    </reaction>
</comment>
<comment type="subunit">
    <text evidence="1">Heterooligomer composed of large and small subunits.</text>
</comment>
<comment type="subcellular location">
    <subcellularLocation>
        <location evidence="1">Cytoplasm</location>
    </subcellularLocation>
</comment>
<comment type="similarity">
    <text evidence="1">Belongs to the XseA family.</text>
</comment>
<protein>
    <recommendedName>
        <fullName evidence="1">Exodeoxyribonuclease 7 large subunit</fullName>
        <ecNumber evidence="1">3.1.11.6</ecNumber>
    </recommendedName>
    <alternativeName>
        <fullName evidence="1">Exodeoxyribonuclease VII large subunit</fullName>
        <shortName evidence="1">Exonuclease VII large subunit</shortName>
    </alternativeName>
</protein>
<dbReference type="EC" id="3.1.11.6" evidence="1"/>
<dbReference type="EMBL" id="CR954253">
    <property type="protein sequence ID" value="CAI98225.1"/>
    <property type="molecule type" value="Genomic_DNA"/>
</dbReference>
<dbReference type="RefSeq" id="WP_011544046.1">
    <property type="nucleotide sequence ID" value="NC_008054.1"/>
</dbReference>
<dbReference type="SMR" id="Q1G9H2"/>
<dbReference type="STRING" id="390333.Ldb1424"/>
<dbReference type="KEGG" id="ldb:Ldb1424"/>
<dbReference type="PATRIC" id="fig|390333.13.peg.1944"/>
<dbReference type="eggNOG" id="COG1570">
    <property type="taxonomic scope" value="Bacteria"/>
</dbReference>
<dbReference type="HOGENOM" id="CLU_023625_3_1_9"/>
<dbReference type="BioCyc" id="LDEL390333:LDB_RS06120-MONOMER"/>
<dbReference type="Proteomes" id="UP000001259">
    <property type="component" value="Chromosome"/>
</dbReference>
<dbReference type="GO" id="GO:0005737">
    <property type="term" value="C:cytoplasm"/>
    <property type="evidence" value="ECO:0007669"/>
    <property type="project" value="UniProtKB-SubCell"/>
</dbReference>
<dbReference type="GO" id="GO:0009318">
    <property type="term" value="C:exodeoxyribonuclease VII complex"/>
    <property type="evidence" value="ECO:0007669"/>
    <property type="project" value="InterPro"/>
</dbReference>
<dbReference type="GO" id="GO:0008855">
    <property type="term" value="F:exodeoxyribonuclease VII activity"/>
    <property type="evidence" value="ECO:0007669"/>
    <property type="project" value="UniProtKB-UniRule"/>
</dbReference>
<dbReference type="GO" id="GO:0003676">
    <property type="term" value="F:nucleic acid binding"/>
    <property type="evidence" value="ECO:0007669"/>
    <property type="project" value="InterPro"/>
</dbReference>
<dbReference type="GO" id="GO:0006308">
    <property type="term" value="P:DNA catabolic process"/>
    <property type="evidence" value="ECO:0007669"/>
    <property type="project" value="UniProtKB-UniRule"/>
</dbReference>
<dbReference type="CDD" id="cd04489">
    <property type="entry name" value="ExoVII_LU_OBF"/>
    <property type="match status" value="1"/>
</dbReference>
<dbReference type="HAMAP" id="MF_00378">
    <property type="entry name" value="Exonuc_7_L"/>
    <property type="match status" value="1"/>
</dbReference>
<dbReference type="InterPro" id="IPR003753">
    <property type="entry name" value="Exonuc_VII_L"/>
</dbReference>
<dbReference type="InterPro" id="IPR020579">
    <property type="entry name" value="Exonuc_VII_lsu_C"/>
</dbReference>
<dbReference type="InterPro" id="IPR025824">
    <property type="entry name" value="OB-fold_nuc-bd_dom"/>
</dbReference>
<dbReference type="NCBIfam" id="TIGR00237">
    <property type="entry name" value="xseA"/>
    <property type="match status" value="1"/>
</dbReference>
<dbReference type="PANTHER" id="PTHR30008">
    <property type="entry name" value="EXODEOXYRIBONUCLEASE 7 LARGE SUBUNIT"/>
    <property type="match status" value="1"/>
</dbReference>
<dbReference type="PANTHER" id="PTHR30008:SF0">
    <property type="entry name" value="EXODEOXYRIBONUCLEASE 7 LARGE SUBUNIT"/>
    <property type="match status" value="1"/>
</dbReference>
<dbReference type="Pfam" id="PF02601">
    <property type="entry name" value="Exonuc_VII_L"/>
    <property type="match status" value="1"/>
</dbReference>
<dbReference type="Pfam" id="PF13742">
    <property type="entry name" value="tRNA_anti_2"/>
    <property type="match status" value="1"/>
</dbReference>
<feature type="chain" id="PRO_0000273663" description="Exodeoxyribonuclease 7 large subunit">
    <location>
        <begin position="1"/>
        <end position="456"/>
    </location>
</feature>
<name>EX7L_LACDA</name>
<proteinExistence type="inferred from homology"/>
<accession>Q1G9H2</accession>